<sequence length="244" mass="26624">MRNIKLIIEYDGTAYCGWQLQPNGITIQQVIEESLEKMLGQSVRLQSSGRTDAGVHALGMVAVFKTQKDLPVRAFSDGLNCLLPPDIAIRDASEVPLSFNPRADAISKHYRYTIYNSKRRSPLTRLNSWHLRGILNMELMQLGASHFVGEHDFAAFRASNCVAKTTIRRMFHVSVAKVGDSVIIDVHGSGFLKNMVRVIAGTLVAVGQGKLDPSAIPGLLAGGDRSASGITAPPQGLCLMEVFY</sequence>
<reference key="1">
    <citation type="submission" date="2009-01" db="EMBL/GenBank/DDBJ databases">
        <title>Complete sequence of Geobacter sp. FRC-32.</title>
        <authorList>
            <consortium name="US DOE Joint Genome Institute"/>
            <person name="Lucas S."/>
            <person name="Copeland A."/>
            <person name="Lapidus A."/>
            <person name="Glavina del Rio T."/>
            <person name="Dalin E."/>
            <person name="Tice H."/>
            <person name="Bruce D."/>
            <person name="Goodwin L."/>
            <person name="Pitluck S."/>
            <person name="Saunders E."/>
            <person name="Brettin T."/>
            <person name="Detter J.C."/>
            <person name="Han C."/>
            <person name="Larimer F."/>
            <person name="Land M."/>
            <person name="Hauser L."/>
            <person name="Kyrpides N."/>
            <person name="Ovchinnikova G."/>
            <person name="Kostka J."/>
            <person name="Richardson P."/>
        </authorList>
    </citation>
    <scope>NUCLEOTIDE SEQUENCE [LARGE SCALE GENOMIC DNA]</scope>
    <source>
        <strain>DSM 22248 / JCM 15807 / FRC-32</strain>
    </source>
</reference>
<accession>B9M6W5</accession>
<protein>
    <recommendedName>
        <fullName evidence="1">tRNA pseudouridine synthase A</fullName>
        <ecNumber evidence="1">5.4.99.12</ecNumber>
    </recommendedName>
    <alternativeName>
        <fullName evidence="1">tRNA pseudouridine(38-40) synthase</fullName>
    </alternativeName>
    <alternativeName>
        <fullName evidence="1">tRNA pseudouridylate synthase I</fullName>
    </alternativeName>
    <alternativeName>
        <fullName evidence="1">tRNA-uridine isomerase I</fullName>
    </alternativeName>
</protein>
<keyword id="KW-0413">Isomerase</keyword>
<keyword id="KW-1185">Reference proteome</keyword>
<keyword id="KW-0819">tRNA processing</keyword>
<gene>
    <name evidence="1" type="primary">truA</name>
    <name type="ordered locus">Geob_3645</name>
</gene>
<proteinExistence type="inferred from homology"/>
<comment type="function">
    <text evidence="1">Formation of pseudouridine at positions 38, 39 and 40 in the anticodon stem and loop of transfer RNAs.</text>
</comment>
<comment type="catalytic activity">
    <reaction evidence="1">
        <text>uridine(38/39/40) in tRNA = pseudouridine(38/39/40) in tRNA</text>
        <dbReference type="Rhea" id="RHEA:22376"/>
        <dbReference type="Rhea" id="RHEA-COMP:10085"/>
        <dbReference type="Rhea" id="RHEA-COMP:10087"/>
        <dbReference type="ChEBI" id="CHEBI:65314"/>
        <dbReference type="ChEBI" id="CHEBI:65315"/>
        <dbReference type="EC" id="5.4.99.12"/>
    </reaction>
</comment>
<comment type="subunit">
    <text evidence="1">Homodimer.</text>
</comment>
<comment type="similarity">
    <text evidence="1">Belongs to the tRNA pseudouridine synthase TruA family.</text>
</comment>
<name>TRUA_GEODF</name>
<dbReference type="EC" id="5.4.99.12" evidence="1"/>
<dbReference type="EMBL" id="CP001390">
    <property type="protein sequence ID" value="ACM21986.1"/>
    <property type="molecule type" value="Genomic_DNA"/>
</dbReference>
<dbReference type="RefSeq" id="WP_012648712.1">
    <property type="nucleotide sequence ID" value="NC_011979.1"/>
</dbReference>
<dbReference type="SMR" id="B9M6W5"/>
<dbReference type="STRING" id="316067.Geob_3645"/>
<dbReference type="KEGG" id="geo:Geob_3645"/>
<dbReference type="eggNOG" id="COG0101">
    <property type="taxonomic scope" value="Bacteria"/>
</dbReference>
<dbReference type="HOGENOM" id="CLU_014673_0_1_7"/>
<dbReference type="OrthoDB" id="9811823at2"/>
<dbReference type="Proteomes" id="UP000007721">
    <property type="component" value="Chromosome"/>
</dbReference>
<dbReference type="GO" id="GO:0003723">
    <property type="term" value="F:RNA binding"/>
    <property type="evidence" value="ECO:0007669"/>
    <property type="project" value="InterPro"/>
</dbReference>
<dbReference type="GO" id="GO:0160147">
    <property type="term" value="F:tRNA pseudouridine(38-40) synthase activity"/>
    <property type="evidence" value="ECO:0007669"/>
    <property type="project" value="UniProtKB-EC"/>
</dbReference>
<dbReference type="GO" id="GO:0031119">
    <property type="term" value="P:tRNA pseudouridine synthesis"/>
    <property type="evidence" value="ECO:0007669"/>
    <property type="project" value="UniProtKB-UniRule"/>
</dbReference>
<dbReference type="CDD" id="cd02570">
    <property type="entry name" value="PseudoU_synth_EcTruA"/>
    <property type="match status" value="1"/>
</dbReference>
<dbReference type="FunFam" id="3.30.70.580:FF:000001">
    <property type="entry name" value="tRNA pseudouridine synthase A"/>
    <property type="match status" value="1"/>
</dbReference>
<dbReference type="Gene3D" id="3.30.70.660">
    <property type="entry name" value="Pseudouridine synthase I, catalytic domain, C-terminal subdomain"/>
    <property type="match status" value="1"/>
</dbReference>
<dbReference type="Gene3D" id="3.30.70.580">
    <property type="entry name" value="Pseudouridine synthase I, catalytic domain, N-terminal subdomain"/>
    <property type="match status" value="1"/>
</dbReference>
<dbReference type="HAMAP" id="MF_00171">
    <property type="entry name" value="TruA"/>
    <property type="match status" value="1"/>
</dbReference>
<dbReference type="InterPro" id="IPR020103">
    <property type="entry name" value="PsdUridine_synth_cat_dom_sf"/>
</dbReference>
<dbReference type="InterPro" id="IPR001406">
    <property type="entry name" value="PsdUridine_synth_TruA"/>
</dbReference>
<dbReference type="InterPro" id="IPR020097">
    <property type="entry name" value="PsdUridine_synth_TruA_a/b_dom"/>
</dbReference>
<dbReference type="InterPro" id="IPR020095">
    <property type="entry name" value="PsdUridine_synth_TruA_C"/>
</dbReference>
<dbReference type="InterPro" id="IPR020094">
    <property type="entry name" value="TruA/RsuA/RluB/E/F_N"/>
</dbReference>
<dbReference type="NCBIfam" id="TIGR00071">
    <property type="entry name" value="hisT_truA"/>
    <property type="match status" value="1"/>
</dbReference>
<dbReference type="PANTHER" id="PTHR11142">
    <property type="entry name" value="PSEUDOURIDYLATE SYNTHASE"/>
    <property type="match status" value="1"/>
</dbReference>
<dbReference type="PANTHER" id="PTHR11142:SF0">
    <property type="entry name" value="TRNA PSEUDOURIDINE SYNTHASE-LIKE 1"/>
    <property type="match status" value="1"/>
</dbReference>
<dbReference type="Pfam" id="PF01416">
    <property type="entry name" value="PseudoU_synth_1"/>
    <property type="match status" value="2"/>
</dbReference>
<dbReference type="PIRSF" id="PIRSF001430">
    <property type="entry name" value="tRNA_psdUrid_synth"/>
    <property type="match status" value="1"/>
</dbReference>
<dbReference type="SUPFAM" id="SSF55120">
    <property type="entry name" value="Pseudouridine synthase"/>
    <property type="match status" value="1"/>
</dbReference>
<organism>
    <name type="scientific">Geotalea daltonii (strain DSM 22248 / JCM 15807 / FRC-32)</name>
    <name type="common">Geobacter daltonii</name>
    <dbReference type="NCBI Taxonomy" id="316067"/>
    <lineage>
        <taxon>Bacteria</taxon>
        <taxon>Pseudomonadati</taxon>
        <taxon>Thermodesulfobacteriota</taxon>
        <taxon>Desulfuromonadia</taxon>
        <taxon>Geobacterales</taxon>
        <taxon>Geobacteraceae</taxon>
        <taxon>Geotalea</taxon>
    </lineage>
</organism>
<feature type="chain" id="PRO_1000194558" description="tRNA pseudouridine synthase A">
    <location>
        <begin position="1"/>
        <end position="244"/>
    </location>
</feature>
<feature type="active site" description="Nucleophile" evidence="1">
    <location>
        <position position="52"/>
    </location>
</feature>
<feature type="binding site" evidence="1">
    <location>
        <position position="110"/>
    </location>
    <ligand>
        <name>substrate</name>
    </ligand>
</feature>
<evidence type="ECO:0000255" key="1">
    <source>
        <dbReference type="HAMAP-Rule" id="MF_00171"/>
    </source>
</evidence>